<reference key="1">
    <citation type="journal article" date="2010" name="PLoS Genet.">
        <title>Genome sequence of the plant growth promoting endophytic bacterium Enterobacter sp. 638.</title>
        <authorList>
            <person name="Taghavi S."/>
            <person name="van der Lelie D."/>
            <person name="Hoffman A."/>
            <person name="Zhang Y.B."/>
            <person name="Walla M.D."/>
            <person name="Vangronsveld J."/>
            <person name="Newman L."/>
            <person name="Monchy S."/>
        </authorList>
    </citation>
    <scope>NUCLEOTIDE SEQUENCE [LARGE SCALE GENOMIC DNA]</scope>
    <source>
        <strain>638</strain>
    </source>
</reference>
<gene>
    <name evidence="1" type="primary">yidC</name>
    <name type="ordered locus">Ent638_4149</name>
</gene>
<evidence type="ECO:0000255" key="1">
    <source>
        <dbReference type="HAMAP-Rule" id="MF_01810"/>
    </source>
</evidence>
<evidence type="ECO:0000256" key="2">
    <source>
        <dbReference type="SAM" id="MobiDB-lite"/>
    </source>
</evidence>
<protein>
    <recommendedName>
        <fullName evidence="1">Membrane protein insertase YidC</fullName>
    </recommendedName>
    <alternativeName>
        <fullName evidence="1">Foldase YidC</fullName>
    </alternativeName>
    <alternativeName>
        <fullName evidence="1">Membrane integrase YidC</fullName>
    </alternativeName>
    <alternativeName>
        <fullName evidence="1">Membrane protein YidC</fullName>
    </alternativeName>
</protein>
<name>YIDC_ENT38</name>
<dbReference type="EMBL" id="CP000653">
    <property type="protein sequence ID" value="ABP62802.1"/>
    <property type="molecule type" value="Genomic_DNA"/>
</dbReference>
<dbReference type="RefSeq" id="WP_015961104.1">
    <property type="nucleotide sequence ID" value="NC_009436.1"/>
</dbReference>
<dbReference type="SMR" id="A4WGH2"/>
<dbReference type="STRING" id="399742.Ent638_4149"/>
<dbReference type="GeneID" id="93307154"/>
<dbReference type="KEGG" id="ent:Ent638_4149"/>
<dbReference type="eggNOG" id="COG0706">
    <property type="taxonomic scope" value="Bacteria"/>
</dbReference>
<dbReference type="HOGENOM" id="CLU_016535_3_0_6"/>
<dbReference type="OrthoDB" id="9780552at2"/>
<dbReference type="Proteomes" id="UP000000230">
    <property type="component" value="Chromosome"/>
</dbReference>
<dbReference type="GO" id="GO:0005886">
    <property type="term" value="C:plasma membrane"/>
    <property type="evidence" value="ECO:0007669"/>
    <property type="project" value="UniProtKB-SubCell"/>
</dbReference>
<dbReference type="GO" id="GO:0032977">
    <property type="term" value="F:membrane insertase activity"/>
    <property type="evidence" value="ECO:0007669"/>
    <property type="project" value="InterPro"/>
</dbReference>
<dbReference type="GO" id="GO:0051205">
    <property type="term" value="P:protein insertion into membrane"/>
    <property type="evidence" value="ECO:0007669"/>
    <property type="project" value="TreeGrafter"/>
</dbReference>
<dbReference type="GO" id="GO:0015031">
    <property type="term" value="P:protein transport"/>
    <property type="evidence" value="ECO:0007669"/>
    <property type="project" value="UniProtKB-KW"/>
</dbReference>
<dbReference type="CDD" id="cd20070">
    <property type="entry name" value="5TM_YidC_Alb3"/>
    <property type="match status" value="1"/>
</dbReference>
<dbReference type="CDD" id="cd19961">
    <property type="entry name" value="EcYidC-like_peri"/>
    <property type="match status" value="1"/>
</dbReference>
<dbReference type="FunFam" id="2.70.98.90:FF:000001">
    <property type="entry name" value="Membrane protein insertase YidC"/>
    <property type="match status" value="1"/>
</dbReference>
<dbReference type="Gene3D" id="2.70.98.90">
    <property type="match status" value="1"/>
</dbReference>
<dbReference type="HAMAP" id="MF_01810">
    <property type="entry name" value="YidC_type1"/>
    <property type="match status" value="1"/>
</dbReference>
<dbReference type="InterPro" id="IPR019998">
    <property type="entry name" value="Membr_insert_YidC"/>
</dbReference>
<dbReference type="InterPro" id="IPR028053">
    <property type="entry name" value="Membr_insert_YidC_N"/>
</dbReference>
<dbReference type="InterPro" id="IPR001708">
    <property type="entry name" value="YidC/ALB3/OXA1/COX18"/>
</dbReference>
<dbReference type="InterPro" id="IPR028055">
    <property type="entry name" value="YidC/Oxa/ALB_C"/>
</dbReference>
<dbReference type="InterPro" id="IPR047196">
    <property type="entry name" value="YidC_ALB_C"/>
</dbReference>
<dbReference type="InterPro" id="IPR038221">
    <property type="entry name" value="YidC_periplasmic_sf"/>
</dbReference>
<dbReference type="NCBIfam" id="NF002351">
    <property type="entry name" value="PRK01318.1-1"/>
    <property type="match status" value="1"/>
</dbReference>
<dbReference type="NCBIfam" id="NF002352">
    <property type="entry name" value="PRK01318.1-3"/>
    <property type="match status" value="1"/>
</dbReference>
<dbReference type="NCBIfam" id="NF002353">
    <property type="entry name" value="PRK01318.1-4"/>
    <property type="match status" value="1"/>
</dbReference>
<dbReference type="NCBIfam" id="TIGR03593">
    <property type="entry name" value="yidC_nterm"/>
    <property type="match status" value="1"/>
</dbReference>
<dbReference type="NCBIfam" id="TIGR03592">
    <property type="entry name" value="yidC_oxa1_cterm"/>
    <property type="match status" value="1"/>
</dbReference>
<dbReference type="PANTHER" id="PTHR12428:SF65">
    <property type="entry name" value="CYTOCHROME C OXIDASE ASSEMBLY PROTEIN COX18, MITOCHONDRIAL"/>
    <property type="match status" value="1"/>
</dbReference>
<dbReference type="PANTHER" id="PTHR12428">
    <property type="entry name" value="OXA1"/>
    <property type="match status" value="1"/>
</dbReference>
<dbReference type="Pfam" id="PF02096">
    <property type="entry name" value="60KD_IMP"/>
    <property type="match status" value="1"/>
</dbReference>
<dbReference type="Pfam" id="PF14849">
    <property type="entry name" value="YidC_periplas"/>
    <property type="match status" value="1"/>
</dbReference>
<dbReference type="PRINTS" id="PR00701">
    <property type="entry name" value="60KDINNERMP"/>
</dbReference>
<dbReference type="PRINTS" id="PR01900">
    <property type="entry name" value="YIDCPROTEIN"/>
</dbReference>
<accession>A4WGH2</accession>
<sequence>MDSQRNLLVIALLFVSFMIWQAWEQDKNPQPQQQQTTQTTTTAAGSAADQGVPASGQGKQITVKTDVLELTINTRGGDIEQALLLTYPKELKSNEPFQLLETTPEFLYQAQSGLTGRDGPDNPANGARPLYNVDKDTFVMADGQNELAIPMTYTDAAGNTFTKTFTLKRGEYAVSVGYNVQNTSAKPLEVSTFGQLKQSINLPSHRDTGSSNFALHTFRGAAYSTPDTKYEKYKFDTIADNENLNVSAKGGWVAMLQQYFATAWVPNNDGVNNFYTANLGNGIAAIGYKSQPVLVQPGQTGTLGSTLWVGPEIQNKMAAVAPHLDLTVDYGWLWFISQPLFKLLKWIHSFLGNWGFSIIVITFIVRGIMYPLTKAQYTSMAKMRMLQPKIAAMRERLGDDKQRQSQEMMALYKAEKVNPLGGCFPLLIQMPIFLALYYMLMGSVELRHAPFALWIHDLSAQDPYYILPILMGITMFFIQKMSPTTVTDPMQQKIMTFMPVIFTVFFLWFPSGLVLYYIVSNLVTILQQQLIYRGLEKRGLHSREKKKS</sequence>
<proteinExistence type="inferred from homology"/>
<organism>
    <name type="scientific">Enterobacter sp. (strain 638)</name>
    <dbReference type="NCBI Taxonomy" id="399742"/>
    <lineage>
        <taxon>Bacteria</taxon>
        <taxon>Pseudomonadati</taxon>
        <taxon>Pseudomonadota</taxon>
        <taxon>Gammaproteobacteria</taxon>
        <taxon>Enterobacterales</taxon>
        <taxon>Enterobacteriaceae</taxon>
        <taxon>Enterobacter</taxon>
    </lineage>
</organism>
<feature type="chain" id="PRO_1000070090" description="Membrane protein insertase YidC">
    <location>
        <begin position="1"/>
        <end position="548"/>
    </location>
</feature>
<feature type="transmembrane region" description="Helical" evidence="1">
    <location>
        <begin position="6"/>
        <end position="26"/>
    </location>
</feature>
<feature type="transmembrane region" description="Helical" evidence="1">
    <location>
        <begin position="350"/>
        <end position="370"/>
    </location>
</feature>
<feature type="transmembrane region" description="Helical" evidence="1">
    <location>
        <begin position="420"/>
        <end position="440"/>
    </location>
</feature>
<feature type="transmembrane region" description="Helical" evidence="1">
    <location>
        <begin position="458"/>
        <end position="478"/>
    </location>
</feature>
<feature type="transmembrane region" description="Helical" evidence="1">
    <location>
        <begin position="499"/>
        <end position="519"/>
    </location>
</feature>
<feature type="region of interest" description="Disordered" evidence="2">
    <location>
        <begin position="28"/>
        <end position="58"/>
    </location>
</feature>
<feature type="compositionally biased region" description="Low complexity" evidence="2">
    <location>
        <begin position="29"/>
        <end position="42"/>
    </location>
</feature>
<keyword id="KW-0997">Cell inner membrane</keyword>
<keyword id="KW-1003">Cell membrane</keyword>
<keyword id="KW-0143">Chaperone</keyword>
<keyword id="KW-0472">Membrane</keyword>
<keyword id="KW-0653">Protein transport</keyword>
<keyword id="KW-0812">Transmembrane</keyword>
<keyword id="KW-1133">Transmembrane helix</keyword>
<keyword id="KW-0813">Transport</keyword>
<comment type="function">
    <text evidence="1">Required for the insertion and/or proper folding and/or complex formation of integral membrane proteins into the membrane. Involved in integration of membrane proteins that insert both dependently and independently of the Sec translocase complex, as well as at least some lipoproteins. Aids folding of multispanning membrane proteins.</text>
</comment>
<comment type="subunit">
    <text evidence="1">Interacts with the Sec translocase complex via SecD. Specifically interacts with transmembrane segments of nascent integral membrane proteins during membrane integration.</text>
</comment>
<comment type="subcellular location">
    <subcellularLocation>
        <location evidence="1">Cell inner membrane</location>
        <topology evidence="1">Multi-pass membrane protein</topology>
    </subcellularLocation>
</comment>
<comment type="similarity">
    <text evidence="1">Belongs to the OXA1/ALB3/YidC family. Type 1 subfamily.</text>
</comment>